<sequence length="103" mass="11736">MQNQRIRIRLKAFDHRLIDQATAEIVETAKRTGAQVRGPIPLPTRKERFTVLISPHVNKDARDQYEIRTHLRLVDIVEPTEKTVDALMRLDLAAGVDVQISLG</sequence>
<proteinExistence type="inferred from homology"/>
<name>RS10_ECO27</name>
<gene>
    <name evidence="1" type="primary">rpsJ</name>
    <name type="ordered locus">E2348C_3584</name>
</gene>
<reference key="1">
    <citation type="journal article" date="2009" name="J. Bacteriol.">
        <title>Complete genome sequence and comparative genome analysis of enteropathogenic Escherichia coli O127:H6 strain E2348/69.</title>
        <authorList>
            <person name="Iguchi A."/>
            <person name="Thomson N.R."/>
            <person name="Ogura Y."/>
            <person name="Saunders D."/>
            <person name="Ooka T."/>
            <person name="Henderson I.R."/>
            <person name="Harris D."/>
            <person name="Asadulghani M."/>
            <person name="Kurokawa K."/>
            <person name="Dean P."/>
            <person name="Kenny B."/>
            <person name="Quail M.A."/>
            <person name="Thurston S."/>
            <person name="Dougan G."/>
            <person name="Hayashi T."/>
            <person name="Parkhill J."/>
            <person name="Frankel G."/>
        </authorList>
    </citation>
    <scope>NUCLEOTIDE SEQUENCE [LARGE SCALE GENOMIC DNA]</scope>
    <source>
        <strain>E2348/69 / EPEC</strain>
    </source>
</reference>
<comment type="function">
    <text evidence="1">Involved in the binding of tRNA to the ribosomes.</text>
</comment>
<comment type="subunit">
    <text evidence="1">Part of the 30S ribosomal subunit.</text>
</comment>
<comment type="similarity">
    <text evidence="1">Belongs to the universal ribosomal protein uS10 family.</text>
</comment>
<feature type="chain" id="PRO_1000146053" description="Small ribosomal subunit protein uS10">
    <location>
        <begin position="1"/>
        <end position="103"/>
    </location>
</feature>
<keyword id="KW-1185">Reference proteome</keyword>
<keyword id="KW-0687">Ribonucleoprotein</keyword>
<keyword id="KW-0689">Ribosomal protein</keyword>
<organism>
    <name type="scientific">Escherichia coli O127:H6 (strain E2348/69 / EPEC)</name>
    <dbReference type="NCBI Taxonomy" id="574521"/>
    <lineage>
        <taxon>Bacteria</taxon>
        <taxon>Pseudomonadati</taxon>
        <taxon>Pseudomonadota</taxon>
        <taxon>Gammaproteobacteria</taxon>
        <taxon>Enterobacterales</taxon>
        <taxon>Enterobacteriaceae</taxon>
        <taxon>Escherichia</taxon>
    </lineage>
</organism>
<evidence type="ECO:0000255" key="1">
    <source>
        <dbReference type="HAMAP-Rule" id="MF_00508"/>
    </source>
</evidence>
<evidence type="ECO:0000305" key="2"/>
<protein>
    <recommendedName>
        <fullName evidence="1">Small ribosomal subunit protein uS10</fullName>
    </recommendedName>
    <alternativeName>
        <fullName evidence="2">30S ribosomal protein S10</fullName>
    </alternativeName>
</protein>
<dbReference type="EMBL" id="FM180568">
    <property type="protein sequence ID" value="CAS11132.1"/>
    <property type="molecule type" value="Genomic_DNA"/>
</dbReference>
<dbReference type="RefSeq" id="WP_001181004.1">
    <property type="nucleotide sequence ID" value="NC_011601.1"/>
</dbReference>
<dbReference type="SMR" id="B7UK45"/>
<dbReference type="GeneID" id="93778666"/>
<dbReference type="KEGG" id="ecg:E2348C_3584"/>
<dbReference type="HOGENOM" id="CLU_122625_1_3_6"/>
<dbReference type="Proteomes" id="UP000008205">
    <property type="component" value="Chromosome"/>
</dbReference>
<dbReference type="GO" id="GO:1990904">
    <property type="term" value="C:ribonucleoprotein complex"/>
    <property type="evidence" value="ECO:0007669"/>
    <property type="project" value="UniProtKB-KW"/>
</dbReference>
<dbReference type="GO" id="GO:0005840">
    <property type="term" value="C:ribosome"/>
    <property type="evidence" value="ECO:0007669"/>
    <property type="project" value="UniProtKB-KW"/>
</dbReference>
<dbReference type="GO" id="GO:0003735">
    <property type="term" value="F:structural constituent of ribosome"/>
    <property type="evidence" value="ECO:0007669"/>
    <property type="project" value="InterPro"/>
</dbReference>
<dbReference type="GO" id="GO:0000049">
    <property type="term" value="F:tRNA binding"/>
    <property type="evidence" value="ECO:0007669"/>
    <property type="project" value="UniProtKB-UniRule"/>
</dbReference>
<dbReference type="GO" id="GO:0006412">
    <property type="term" value="P:translation"/>
    <property type="evidence" value="ECO:0007669"/>
    <property type="project" value="UniProtKB-UniRule"/>
</dbReference>
<dbReference type="FunFam" id="3.30.70.600:FF:000001">
    <property type="entry name" value="30S ribosomal protein S10"/>
    <property type="match status" value="1"/>
</dbReference>
<dbReference type="Gene3D" id="3.30.70.600">
    <property type="entry name" value="Ribosomal protein S10 domain"/>
    <property type="match status" value="1"/>
</dbReference>
<dbReference type="HAMAP" id="MF_00508">
    <property type="entry name" value="Ribosomal_uS10"/>
    <property type="match status" value="1"/>
</dbReference>
<dbReference type="InterPro" id="IPR001848">
    <property type="entry name" value="Ribosomal_uS10"/>
</dbReference>
<dbReference type="InterPro" id="IPR018268">
    <property type="entry name" value="Ribosomal_uS10_CS"/>
</dbReference>
<dbReference type="InterPro" id="IPR027486">
    <property type="entry name" value="Ribosomal_uS10_dom"/>
</dbReference>
<dbReference type="InterPro" id="IPR036838">
    <property type="entry name" value="Ribosomal_uS10_dom_sf"/>
</dbReference>
<dbReference type="NCBIfam" id="NF001861">
    <property type="entry name" value="PRK00596.1"/>
    <property type="match status" value="1"/>
</dbReference>
<dbReference type="NCBIfam" id="TIGR01049">
    <property type="entry name" value="rpsJ_bact"/>
    <property type="match status" value="1"/>
</dbReference>
<dbReference type="PANTHER" id="PTHR11700">
    <property type="entry name" value="30S RIBOSOMAL PROTEIN S10 FAMILY MEMBER"/>
    <property type="match status" value="1"/>
</dbReference>
<dbReference type="Pfam" id="PF00338">
    <property type="entry name" value="Ribosomal_S10"/>
    <property type="match status" value="1"/>
</dbReference>
<dbReference type="PRINTS" id="PR00971">
    <property type="entry name" value="RIBOSOMALS10"/>
</dbReference>
<dbReference type="SMART" id="SM01403">
    <property type="entry name" value="Ribosomal_S10"/>
    <property type="match status" value="1"/>
</dbReference>
<dbReference type="SUPFAM" id="SSF54999">
    <property type="entry name" value="Ribosomal protein S10"/>
    <property type="match status" value="1"/>
</dbReference>
<dbReference type="PROSITE" id="PS00361">
    <property type="entry name" value="RIBOSOMAL_S10"/>
    <property type="match status" value="1"/>
</dbReference>
<accession>B7UK45</accession>